<feature type="chain" id="PRO_0000204143" description="L-fucose isomerase">
    <location>
        <begin position="1"/>
        <end position="591"/>
    </location>
</feature>
<feature type="active site" description="Proton acceptor" evidence="1">
    <location>
        <position position="338"/>
    </location>
</feature>
<feature type="active site" description="Proton acceptor" evidence="1">
    <location>
        <position position="362"/>
    </location>
</feature>
<feature type="binding site" evidence="1">
    <location>
        <position position="338"/>
    </location>
    <ligand>
        <name>Mn(2+)</name>
        <dbReference type="ChEBI" id="CHEBI:29035"/>
    </ligand>
</feature>
<feature type="binding site" evidence="1">
    <location>
        <position position="362"/>
    </location>
    <ligand>
        <name>Mn(2+)</name>
        <dbReference type="ChEBI" id="CHEBI:29035"/>
    </ligand>
</feature>
<feature type="binding site" evidence="1">
    <location>
        <position position="529"/>
    </location>
    <ligand>
        <name>Mn(2+)</name>
        <dbReference type="ChEBI" id="CHEBI:29035"/>
    </ligand>
</feature>
<organism>
    <name type="scientific">Bacteroides thetaiotaomicron (strain ATCC 29148 / DSM 2079 / JCM 5827 / CCUG 10774 / NCTC 10582 / VPI-5482 / E50)</name>
    <dbReference type="NCBI Taxonomy" id="226186"/>
    <lineage>
        <taxon>Bacteria</taxon>
        <taxon>Pseudomonadati</taxon>
        <taxon>Bacteroidota</taxon>
        <taxon>Bacteroidia</taxon>
        <taxon>Bacteroidales</taxon>
        <taxon>Bacteroidaceae</taxon>
        <taxon>Bacteroides</taxon>
    </lineage>
</organism>
<sequence>MKKYPKIGIRPTIDGRQGGVRESLEEKTMNLAKAVAELISNNLKNGDGSPVECIIADNTIGRVAESAACAEKFEREGVGSTITVTSCWCYGAETMDMNPHYPKAVWGFNGTERPGAVYLAAVLAGHAQKGLPAFGIYGRDVQDLDDNTIPEDVAEKILRFARAAQAVATMRGKSYLSMGSVSMGIAGSIVNPDFFQEYLGMRNESIDLTEIIRRMEEGIYDHEEYAKAMAWTEKYCKVNEGEDFKNRPEKRKKREQKDADWEFVVKMMIIMRDLMTGNPKLKEMGFKEEALGHNAIAAGFQGQRQWTDFYPNGDYPEALLNTSFDWNGIREAFVVATENDACNGVAMLFGHLLTNRAQIFSDVRTYWSPEAVKRVTGKELTGLAANGIIHLINSGATTLDGSGQSLDAEGNPVMKEPWNLTDADVENCLKATTWYPADRDYFRGGGFSSNFLSKGGMPVTMMRLNLIKGLGPVLQIAEGWTVEIDPEIHQKLNMRTDPTWPTTWFVPRLCDKSAFKDVYSVMNNWGANHGAISYGHIGQDLITLASMLRIPVCMHNVDENEIFRPTAWNAFGMDKEGADYRACTTYGPIYK</sequence>
<proteinExistence type="inferred from homology"/>
<name>FUCI_BACTN</name>
<keyword id="KW-0119">Carbohydrate metabolism</keyword>
<keyword id="KW-0963">Cytoplasm</keyword>
<keyword id="KW-0294">Fucose metabolism</keyword>
<keyword id="KW-0413">Isomerase</keyword>
<keyword id="KW-0464">Manganese</keyword>
<keyword id="KW-0479">Metal-binding</keyword>
<keyword id="KW-1185">Reference proteome</keyword>
<reference key="1">
    <citation type="journal article" date="1999" name="Proc. Natl. Acad. Sci. U.S.A.">
        <title>A molecular sensor that allows a gut commensal to control its nutrient foundation in a competitive ecosystem.</title>
        <authorList>
            <person name="Hooper L.V."/>
            <person name="Xu J."/>
            <person name="Falk P.G."/>
            <person name="Midtvedt T."/>
            <person name="Gordon J.I."/>
        </authorList>
    </citation>
    <scope>NUCLEOTIDE SEQUENCE [GENOMIC DNA]</scope>
    <source>
        <strain>ATCC 29148 / DSM 2079 / JCM 5827 / CCUG 10774 / NCTC 10582 / VPI-5482 / E50</strain>
    </source>
</reference>
<reference key="2">
    <citation type="journal article" date="2003" name="Science">
        <title>A genomic view of the human-Bacteroides thetaiotaomicron symbiosis.</title>
        <authorList>
            <person name="Xu J."/>
            <person name="Bjursell M.K."/>
            <person name="Himrod J."/>
            <person name="Deng S."/>
            <person name="Carmichael L.K."/>
            <person name="Chiang H.C."/>
            <person name="Hooper L.V."/>
            <person name="Gordon J.I."/>
        </authorList>
    </citation>
    <scope>NUCLEOTIDE SEQUENCE [LARGE SCALE GENOMIC DNA]</scope>
    <source>
        <strain>ATCC 29148 / DSM 2079 / JCM 5827 / CCUG 10774 / NCTC 10582 / VPI-5482 / E50</strain>
    </source>
</reference>
<comment type="function">
    <text evidence="2">Converts the aldose L-fucose into the corresponding ketose L-fuculose.</text>
</comment>
<comment type="catalytic activity">
    <reaction evidence="1">
        <text>L-fucose = L-fuculose</text>
        <dbReference type="Rhea" id="RHEA:17233"/>
        <dbReference type="ChEBI" id="CHEBI:2181"/>
        <dbReference type="ChEBI" id="CHEBI:17617"/>
        <dbReference type="EC" id="5.3.1.25"/>
    </reaction>
</comment>
<comment type="cofactor">
    <cofactor evidence="1">
        <name>Mn(2+)</name>
        <dbReference type="ChEBI" id="CHEBI:29035"/>
    </cofactor>
</comment>
<comment type="pathway">
    <text evidence="1">Carbohydrate degradation; L-fucose degradation; L-lactaldehyde and glycerone phosphate from L-fucose: step 1/3.</text>
</comment>
<comment type="subcellular location">
    <subcellularLocation>
        <location evidence="1">Cytoplasm</location>
    </subcellularLocation>
</comment>
<comment type="similarity">
    <text evidence="1">Belongs to the L-fucose isomerase family.</text>
</comment>
<gene>
    <name evidence="1" type="primary">fucI</name>
    <name type="ordered locus">BT_1273</name>
</gene>
<dbReference type="EC" id="5.3.1.25" evidence="1"/>
<dbReference type="EMBL" id="AF137263">
    <property type="protein sequence ID" value="AAF01484.1"/>
    <property type="molecule type" value="Genomic_DNA"/>
</dbReference>
<dbReference type="EMBL" id="AE015928">
    <property type="protein sequence ID" value="AAO76380.1"/>
    <property type="molecule type" value="Genomic_DNA"/>
</dbReference>
<dbReference type="RefSeq" id="NP_810186.1">
    <property type="nucleotide sequence ID" value="NC_004663.1"/>
</dbReference>
<dbReference type="RefSeq" id="WP_011107686.1">
    <property type="nucleotide sequence ID" value="NC_004663.1"/>
</dbReference>
<dbReference type="SMR" id="Q9RQ13"/>
<dbReference type="STRING" id="226186.BT_1273"/>
<dbReference type="PaxDb" id="226186-BT_1273"/>
<dbReference type="EnsemblBacteria" id="AAO76380">
    <property type="protein sequence ID" value="AAO76380"/>
    <property type="gene ID" value="BT_1273"/>
</dbReference>
<dbReference type="GeneID" id="60927249"/>
<dbReference type="KEGG" id="bth:BT_1273"/>
<dbReference type="PATRIC" id="fig|226186.12.peg.1300"/>
<dbReference type="eggNOG" id="COG2407">
    <property type="taxonomic scope" value="Bacteria"/>
</dbReference>
<dbReference type="HOGENOM" id="CLU_033326_1_0_10"/>
<dbReference type="InParanoid" id="Q9RQ13"/>
<dbReference type="OrthoDB" id="9760430at2"/>
<dbReference type="UniPathway" id="UPA00563">
    <property type="reaction ID" value="UER00624"/>
</dbReference>
<dbReference type="Proteomes" id="UP000001414">
    <property type="component" value="Chromosome"/>
</dbReference>
<dbReference type="GO" id="GO:0005737">
    <property type="term" value="C:cytoplasm"/>
    <property type="evidence" value="ECO:0007669"/>
    <property type="project" value="UniProtKB-SubCell"/>
</dbReference>
<dbReference type="GO" id="GO:0008790">
    <property type="term" value="F:arabinose isomerase activity"/>
    <property type="evidence" value="ECO:0000318"/>
    <property type="project" value="GO_Central"/>
</dbReference>
<dbReference type="GO" id="GO:0008736">
    <property type="term" value="F:L-fucose isomerase activity"/>
    <property type="evidence" value="ECO:0000318"/>
    <property type="project" value="GO_Central"/>
</dbReference>
<dbReference type="GO" id="GO:0030145">
    <property type="term" value="F:manganese ion binding"/>
    <property type="evidence" value="ECO:0007669"/>
    <property type="project" value="UniProtKB-UniRule"/>
</dbReference>
<dbReference type="GO" id="GO:0019571">
    <property type="term" value="P:D-arabinose catabolic process"/>
    <property type="evidence" value="ECO:0000318"/>
    <property type="project" value="GO_Central"/>
</dbReference>
<dbReference type="GO" id="GO:0042355">
    <property type="term" value="P:L-fucose catabolic process"/>
    <property type="evidence" value="ECO:0000318"/>
    <property type="project" value="GO_Central"/>
</dbReference>
<dbReference type="CDD" id="cd03556">
    <property type="entry name" value="L-fucose_isomerase"/>
    <property type="match status" value="1"/>
</dbReference>
<dbReference type="FunFam" id="3.20.14.10:FF:000001">
    <property type="entry name" value="L-fucose isomerase"/>
    <property type="match status" value="1"/>
</dbReference>
<dbReference type="FunFam" id="3.40.275.10:FF:000001">
    <property type="entry name" value="L-fucose isomerase"/>
    <property type="match status" value="1"/>
</dbReference>
<dbReference type="FunFam" id="3.40.50.1070:FF:000001">
    <property type="entry name" value="L-fucose isomerase"/>
    <property type="match status" value="1"/>
</dbReference>
<dbReference type="Gene3D" id="3.40.50.1070">
    <property type="match status" value="1"/>
</dbReference>
<dbReference type="Gene3D" id="3.40.275.10">
    <property type="entry name" value="L-fucose Isomerase, Chain A, domain 2"/>
    <property type="match status" value="1"/>
</dbReference>
<dbReference type="Gene3D" id="3.20.14.10">
    <property type="entry name" value="L-fucose/L-arabinose isomerase, C-terminal"/>
    <property type="match status" value="1"/>
</dbReference>
<dbReference type="HAMAP" id="MF_01254">
    <property type="entry name" value="Fucose_iso"/>
    <property type="match status" value="1"/>
</dbReference>
<dbReference type="InterPro" id="IPR004216">
    <property type="entry name" value="Fuc/Ara_isomerase_C"/>
</dbReference>
<dbReference type="InterPro" id="IPR038393">
    <property type="entry name" value="Fuc_iso_dom3_sf"/>
</dbReference>
<dbReference type="InterPro" id="IPR015888">
    <property type="entry name" value="Fuc_isomerase_C"/>
</dbReference>
<dbReference type="InterPro" id="IPR038391">
    <property type="entry name" value="Fucose_iso_dom1_sf"/>
</dbReference>
<dbReference type="InterPro" id="IPR012888">
    <property type="entry name" value="Fucose_iso_N1"/>
</dbReference>
<dbReference type="InterPro" id="IPR005763">
    <property type="entry name" value="Fucose_isomerase"/>
</dbReference>
<dbReference type="InterPro" id="IPR038392">
    <property type="entry name" value="Fucose_isomerase_dom2_sf"/>
</dbReference>
<dbReference type="InterPro" id="IPR009015">
    <property type="entry name" value="Fucose_isomerase_N/cen_sf"/>
</dbReference>
<dbReference type="InterPro" id="IPR012889">
    <property type="entry name" value="Fucose_isomerase_N2"/>
</dbReference>
<dbReference type="NCBIfam" id="TIGR01089">
    <property type="entry name" value="fucI"/>
    <property type="match status" value="1"/>
</dbReference>
<dbReference type="NCBIfam" id="NF008220">
    <property type="entry name" value="PRK10991.1"/>
    <property type="match status" value="1"/>
</dbReference>
<dbReference type="PANTHER" id="PTHR37840">
    <property type="entry name" value="L-FUCOSE ISOMERASE"/>
    <property type="match status" value="1"/>
</dbReference>
<dbReference type="PANTHER" id="PTHR37840:SF1">
    <property type="entry name" value="L-FUCOSE ISOMERASE"/>
    <property type="match status" value="1"/>
</dbReference>
<dbReference type="Pfam" id="PF02952">
    <property type="entry name" value="Fucose_iso_C"/>
    <property type="match status" value="1"/>
</dbReference>
<dbReference type="Pfam" id="PF07881">
    <property type="entry name" value="Fucose_iso_N1"/>
    <property type="match status" value="1"/>
</dbReference>
<dbReference type="Pfam" id="PF07882">
    <property type="entry name" value="Fucose_iso_N2"/>
    <property type="match status" value="1"/>
</dbReference>
<dbReference type="SUPFAM" id="SSF50443">
    <property type="entry name" value="FucI/AraA C-terminal domain-like"/>
    <property type="match status" value="1"/>
</dbReference>
<dbReference type="SUPFAM" id="SSF53743">
    <property type="entry name" value="FucI/AraA N-terminal and middle domains"/>
    <property type="match status" value="1"/>
</dbReference>
<protein>
    <recommendedName>
        <fullName evidence="1">L-fucose isomerase</fullName>
        <ecNumber evidence="1">5.3.1.25</ecNumber>
    </recommendedName>
    <alternativeName>
        <fullName evidence="1">6-deoxy-L-galactose isomerase</fullName>
    </alternativeName>
    <alternativeName>
        <fullName>FucIase</fullName>
    </alternativeName>
</protein>
<evidence type="ECO:0000255" key="1">
    <source>
        <dbReference type="HAMAP-Rule" id="MF_01254"/>
    </source>
</evidence>
<evidence type="ECO:0000305" key="2"/>
<accession>Q9RQ13</accession>
<accession>Q7C426</accession>